<accession>Q4A5I8</accession>
<dbReference type="EMBL" id="AE017245">
    <property type="protein sequence ID" value="AAZ43983.1"/>
    <property type="molecule type" value="Genomic_DNA"/>
</dbReference>
<dbReference type="RefSeq" id="WP_011283712.1">
    <property type="nucleotide sequence ID" value="NC_007294.1"/>
</dbReference>
<dbReference type="SMR" id="Q4A5I8"/>
<dbReference type="STRING" id="262723.MS53_0576"/>
<dbReference type="GeneID" id="93530368"/>
<dbReference type="KEGG" id="msy:MS53_0576"/>
<dbReference type="eggNOG" id="COG0099">
    <property type="taxonomic scope" value="Bacteria"/>
</dbReference>
<dbReference type="HOGENOM" id="CLU_103849_1_2_14"/>
<dbReference type="OrthoDB" id="9803610at2"/>
<dbReference type="Proteomes" id="UP000000549">
    <property type="component" value="Chromosome"/>
</dbReference>
<dbReference type="GO" id="GO:0005829">
    <property type="term" value="C:cytosol"/>
    <property type="evidence" value="ECO:0007669"/>
    <property type="project" value="TreeGrafter"/>
</dbReference>
<dbReference type="GO" id="GO:0015935">
    <property type="term" value="C:small ribosomal subunit"/>
    <property type="evidence" value="ECO:0007669"/>
    <property type="project" value="TreeGrafter"/>
</dbReference>
<dbReference type="GO" id="GO:0019843">
    <property type="term" value="F:rRNA binding"/>
    <property type="evidence" value="ECO:0007669"/>
    <property type="project" value="UniProtKB-UniRule"/>
</dbReference>
<dbReference type="GO" id="GO:0003735">
    <property type="term" value="F:structural constituent of ribosome"/>
    <property type="evidence" value="ECO:0007669"/>
    <property type="project" value="InterPro"/>
</dbReference>
<dbReference type="GO" id="GO:0000049">
    <property type="term" value="F:tRNA binding"/>
    <property type="evidence" value="ECO:0007669"/>
    <property type="project" value="UniProtKB-UniRule"/>
</dbReference>
<dbReference type="GO" id="GO:0006412">
    <property type="term" value="P:translation"/>
    <property type="evidence" value="ECO:0007669"/>
    <property type="project" value="UniProtKB-UniRule"/>
</dbReference>
<dbReference type="FunFam" id="1.10.8.50:FF:000001">
    <property type="entry name" value="30S ribosomal protein S13"/>
    <property type="match status" value="1"/>
</dbReference>
<dbReference type="FunFam" id="4.10.910.10:FF:000001">
    <property type="entry name" value="30S ribosomal protein S13"/>
    <property type="match status" value="1"/>
</dbReference>
<dbReference type="Gene3D" id="1.10.8.50">
    <property type="match status" value="1"/>
</dbReference>
<dbReference type="Gene3D" id="4.10.910.10">
    <property type="entry name" value="30s ribosomal protein s13, domain 2"/>
    <property type="match status" value="1"/>
</dbReference>
<dbReference type="HAMAP" id="MF_01315">
    <property type="entry name" value="Ribosomal_uS13"/>
    <property type="match status" value="1"/>
</dbReference>
<dbReference type="InterPro" id="IPR027437">
    <property type="entry name" value="Rbsml_uS13_C"/>
</dbReference>
<dbReference type="InterPro" id="IPR001892">
    <property type="entry name" value="Ribosomal_uS13"/>
</dbReference>
<dbReference type="InterPro" id="IPR010979">
    <property type="entry name" value="Ribosomal_uS13-like_H2TH"/>
</dbReference>
<dbReference type="InterPro" id="IPR019980">
    <property type="entry name" value="Ribosomal_uS13_bac-type"/>
</dbReference>
<dbReference type="InterPro" id="IPR018269">
    <property type="entry name" value="Ribosomal_uS13_CS"/>
</dbReference>
<dbReference type="NCBIfam" id="TIGR03631">
    <property type="entry name" value="uS13_bact"/>
    <property type="match status" value="1"/>
</dbReference>
<dbReference type="PANTHER" id="PTHR10871">
    <property type="entry name" value="30S RIBOSOMAL PROTEIN S13/40S RIBOSOMAL PROTEIN S18"/>
    <property type="match status" value="1"/>
</dbReference>
<dbReference type="PANTHER" id="PTHR10871:SF1">
    <property type="entry name" value="SMALL RIBOSOMAL SUBUNIT PROTEIN US13M"/>
    <property type="match status" value="1"/>
</dbReference>
<dbReference type="Pfam" id="PF00416">
    <property type="entry name" value="Ribosomal_S13"/>
    <property type="match status" value="1"/>
</dbReference>
<dbReference type="PIRSF" id="PIRSF002134">
    <property type="entry name" value="Ribosomal_S13"/>
    <property type="match status" value="1"/>
</dbReference>
<dbReference type="SUPFAM" id="SSF46946">
    <property type="entry name" value="S13-like H2TH domain"/>
    <property type="match status" value="1"/>
</dbReference>
<dbReference type="PROSITE" id="PS00646">
    <property type="entry name" value="RIBOSOMAL_S13_1"/>
    <property type="match status" value="1"/>
</dbReference>
<dbReference type="PROSITE" id="PS50159">
    <property type="entry name" value="RIBOSOMAL_S13_2"/>
    <property type="match status" value="1"/>
</dbReference>
<sequence>MARILNIEIPNNKRVVISLTYIYGIGKSLASEICKKANVDENTKTAELTEAQLSKLREVAKAYTTEGDLRREVTLNIKRYMEIKCYRGIRHRKGLPVRGQSTQKNARTRKGPRKTVAGKKGK</sequence>
<reference key="1">
    <citation type="journal article" date="2005" name="J. Bacteriol.">
        <title>Swine and poultry pathogens: the complete genome sequences of two strains of Mycoplasma hyopneumoniae and a strain of Mycoplasma synoviae.</title>
        <authorList>
            <person name="Vasconcelos A.T.R."/>
            <person name="Ferreira H.B."/>
            <person name="Bizarro C.V."/>
            <person name="Bonatto S.L."/>
            <person name="Carvalho M.O."/>
            <person name="Pinto P.M."/>
            <person name="Almeida D.F."/>
            <person name="Almeida L.G.P."/>
            <person name="Almeida R."/>
            <person name="Alves-Junior L."/>
            <person name="Assuncao E.N."/>
            <person name="Azevedo V.A.C."/>
            <person name="Bogo M.R."/>
            <person name="Brigido M.M."/>
            <person name="Brocchi M."/>
            <person name="Burity H.A."/>
            <person name="Camargo A.A."/>
            <person name="Camargo S.S."/>
            <person name="Carepo M.S."/>
            <person name="Carraro D.M."/>
            <person name="de Mattos Cascardo J.C."/>
            <person name="Castro L.A."/>
            <person name="Cavalcanti G."/>
            <person name="Chemale G."/>
            <person name="Collevatti R.G."/>
            <person name="Cunha C.W."/>
            <person name="Dallagiovanna B."/>
            <person name="Dambros B.P."/>
            <person name="Dellagostin O.A."/>
            <person name="Falcao C."/>
            <person name="Fantinatti-Garboggini F."/>
            <person name="Felipe M.S.S."/>
            <person name="Fiorentin L."/>
            <person name="Franco G.R."/>
            <person name="Freitas N.S.A."/>
            <person name="Frias D."/>
            <person name="Grangeiro T.B."/>
            <person name="Grisard E.C."/>
            <person name="Guimaraes C.T."/>
            <person name="Hungria M."/>
            <person name="Jardim S.N."/>
            <person name="Krieger M.A."/>
            <person name="Laurino J.P."/>
            <person name="Lima L.F.A."/>
            <person name="Lopes M.I."/>
            <person name="Loreto E.L.S."/>
            <person name="Madeira H.M.F."/>
            <person name="Manfio G.P."/>
            <person name="Maranhao A.Q."/>
            <person name="Martinkovics C.T."/>
            <person name="Medeiros S.R.B."/>
            <person name="Moreira M.A.M."/>
            <person name="Neiva M."/>
            <person name="Ramalho-Neto C.E."/>
            <person name="Nicolas M.F."/>
            <person name="Oliveira S.C."/>
            <person name="Paixao R.F.C."/>
            <person name="Pedrosa F.O."/>
            <person name="Pena S.D.J."/>
            <person name="Pereira M."/>
            <person name="Pereira-Ferrari L."/>
            <person name="Piffer I."/>
            <person name="Pinto L.S."/>
            <person name="Potrich D.P."/>
            <person name="Salim A.C.M."/>
            <person name="Santos F.R."/>
            <person name="Schmitt R."/>
            <person name="Schneider M.P.C."/>
            <person name="Schrank A."/>
            <person name="Schrank I.S."/>
            <person name="Schuck A.F."/>
            <person name="Seuanez H.N."/>
            <person name="Silva D.W."/>
            <person name="Silva R."/>
            <person name="Silva S.C."/>
            <person name="Soares C.M.A."/>
            <person name="Souza K.R.L."/>
            <person name="Souza R.C."/>
            <person name="Staats C.C."/>
            <person name="Steffens M.B.R."/>
            <person name="Teixeira S.M.R."/>
            <person name="Urmenyi T.P."/>
            <person name="Vainstein M.H."/>
            <person name="Zuccherato L.W."/>
            <person name="Simpson A.J.G."/>
            <person name="Zaha A."/>
        </authorList>
    </citation>
    <scope>NUCLEOTIDE SEQUENCE [LARGE SCALE GENOMIC DNA]</scope>
    <source>
        <strain>53</strain>
    </source>
</reference>
<keyword id="KW-1185">Reference proteome</keyword>
<keyword id="KW-0687">Ribonucleoprotein</keyword>
<keyword id="KW-0689">Ribosomal protein</keyword>
<keyword id="KW-0694">RNA-binding</keyword>
<keyword id="KW-0699">rRNA-binding</keyword>
<keyword id="KW-0820">tRNA-binding</keyword>
<organism>
    <name type="scientific">Mycoplasmopsis synoviae (strain 53)</name>
    <name type="common">Mycoplasma synoviae</name>
    <dbReference type="NCBI Taxonomy" id="262723"/>
    <lineage>
        <taxon>Bacteria</taxon>
        <taxon>Bacillati</taxon>
        <taxon>Mycoplasmatota</taxon>
        <taxon>Mycoplasmoidales</taxon>
        <taxon>Metamycoplasmataceae</taxon>
        <taxon>Mycoplasmopsis</taxon>
    </lineage>
</organism>
<evidence type="ECO:0000255" key="1">
    <source>
        <dbReference type="HAMAP-Rule" id="MF_01315"/>
    </source>
</evidence>
<evidence type="ECO:0000256" key="2">
    <source>
        <dbReference type="SAM" id="MobiDB-lite"/>
    </source>
</evidence>
<evidence type="ECO:0000305" key="3"/>
<comment type="function">
    <text evidence="1">Located at the top of the head of the 30S subunit, it contacts several helices of the 16S rRNA. In the 70S ribosome it contacts the 23S rRNA (bridge B1a) and protein L5 of the 50S subunit (bridge B1b), connecting the 2 subunits; these bridges are implicated in subunit movement. Contacts the tRNAs in the A and P-sites.</text>
</comment>
<comment type="subunit">
    <text evidence="1">Part of the 30S ribosomal subunit. Forms a loose heterodimer with protein S19. Forms two bridges to the 50S subunit in the 70S ribosome.</text>
</comment>
<comment type="similarity">
    <text evidence="1">Belongs to the universal ribosomal protein uS13 family.</text>
</comment>
<feature type="chain" id="PRO_0000230530" description="Small ribosomal subunit protein uS13">
    <location>
        <begin position="1"/>
        <end position="122"/>
    </location>
</feature>
<feature type="region of interest" description="Disordered" evidence="2">
    <location>
        <begin position="94"/>
        <end position="122"/>
    </location>
</feature>
<feature type="compositionally biased region" description="Basic residues" evidence="2">
    <location>
        <begin position="106"/>
        <end position="122"/>
    </location>
</feature>
<proteinExistence type="inferred from homology"/>
<gene>
    <name evidence="1" type="primary">rpsM</name>
    <name type="ordered locus">MS53_0576</name>
</gene>
<protein>
    <recommendedName>
        <fullName evidence="1">Small ribosomal subunit protein uS13</fullName>
    </recommendedName>
    <alternativeName>
        <fullName evidence="3">30S ribosomal protein S13</fullName>
    </alternativeName>
</protein>
<name>RS13_MYCS5</name>